<sequence length="200" mass="22618">MSKVLYIKANAKPEGVSRTFKISDSFIEEYRNQKPNDEIITLDLYKEGISFLTEEAIKLHVPKQGEGKDHHVLKYAYQFAEADKYVIAAPFWNLSFPAILKAYIDYICVTGITFKYTEEGAVGLCQGKKAVHIVSRGGGYSEGPFEMYEMGDRYLRTIFGFLGITDFTTIVAEKLDVVGEDVEGILRNTIEKAKEQAKEF</sequence>
<organism>
    <name type="scientific">Clostridium acetobutylicum (strain ATCC 824 / DSM 792 / JCM 1419 / IAM 19013 / LMG 5710 / NBRC 13948 / NRRL B-527 / VKM B-1787 / 2291 / W)</name>
    <dbReference type="NCBI Taxonomy" id="272562"/>
    <lineage>
        <taxon>Bacteria</taxon>
        <taxon>Bacillati</taxon>
        <taxon>Bacillota</taxon>
        <taxon>Clostridia</taxon>
        <taxon>Eubacteriales</taxon>
        <taxon>Clostridiaceae</taxon>
        <taxon>Clostridium</taxon>
    </lineage>
</organism>
<gene>
    <name evidence="1" type="primary">azoR2</name>
    <name type="ordered locus">CA_C3421</name>
</gene>
<accession>Q97DQ1</accession>
<feature type="chain" id="PRO_0000166332" description="FMN-dependent NADH:quinone oxidoreductase 2">
    <location>
        <begin position="1"/>
        <end position="200"/>
    </location>
</feature>
<feature type="binding site" evidence="1">
    <location>
        <begin position="135"/>
        <end position="138"/>
    </location>
    <ligand>
        <name>FMN</name>
        <dbReference type="ChEBI" id="CHEBI:58210"/>
    </ligand>
</feature>
<protein>
    <recommendedName>
        <fullName evidence="1">FMN-dependent NADH:quinone oxidoreductase 2</fullName>
        <ecNumber evidence="1">1.6.5.-</ecNumber>
    </recommendedName>
    <alternativeName>
        <fullName evidence="1">Azo-dye reductase 2</fullName>
    </alternativeName>
    <alternativeName>
        <fullName evidence="1">FMN-dependent NADH-azo compound oxidoreductase 2</fullName>
    </alternativeName>
    <alternativeName>
        <fullName evidence="1">FMN-dependent NADH-azoreductase 2</fullName>
        <ecNumber evidence="1">1.7.1.17</ecNumber>
    </alternativeName>
</protein>
<name>AZOR2_CLOAB</name>
<proteinExistence type="inferred from homology"/>
<dbReference type="EC" id="1.6.5.-" evidence="1"/>
<dbReference type="EC" id="1.7.1.17" evidence="1"/>
<dbReference type="EMBL" id="AE001437">
    <property type="protein sequence ID" value="AAK81351.1"/>
    <property type="molecule type" value="Genomic_DNA"/>
</dbReference>
<dbReference type="PIR" id="D97320">
    <property type="entry name" value="D97320"/>
</dbReference>
<dbReference type="RefSeq" id="NP_350011.1">
    <property type="nucleotide sequence ID" value="NC_003030.1"/>
</dbReference>
<dbReference type="RefSeq" id="WP_010966691.1">
    <property type="nucleotide sequence ID" value="NC_003030.1"/>
</dbReference>
<dbReference type="SMR" id="Q97DQ1"/>
<dbReference type="STRING" id="272562.CA_C3421"/>
<dbReference type="KEGG" id="cac:CA_C3421"/>
<dbReference type="PATRIC" id="fig|272562.8.peg.3603"/>
<dbReference type="eggNOG" id="COG1182">
    <property type="taxonomic scope" value="Bacteria"/>
</dbReference>
<dbReference type="HOGENOM" id="CLU_088964_3_1_9"/>
<dbReference type="OrthoDB" id="9805013at2"/>
<dbReference type="Proteomes" id="UP000000814">
    <property type="component" value="Chromosome"/>
</dbReference>
<dbReference type="GO" id="GO:0009055">
    <property type="term" value="F:electron transfer activity"/>
    <property type="evidence" value="ECO:0007669"/>
    <property type="project" value="UniProtKB-UniRule"/>
</dbReference>
<dbReference type="GO" id="GO:0010181">
    <property type="term" value="F:FMN binding"/>
    <property type="evidence" value="ECO:0007669"/>
    <property type="project" value="UniProtKB-UniRule"/>
</dbReference>
<dbReference type="GO" id="GO:0016652">
    <property type="term" value="F:oxidoreductase activity, acting on NAD(P)H as acceptor"/>
    <property type="evidence" value="ECO:0007669"/>
    <property type="project" value="UniProtKB-UniRule"/>
</dbReference>
<dbReference type="GO" id="GO:0016655">
    <property type="term" value="F:oxidoreductase activity, acting on NAD(P)H, quinone or similar compound as acceptor"/>
    <property type="evidence" value="ECO:0007669"/>
    <property type="project" value="InterPro"/>
</dbReference>
<dbReference type="Gene3D" id="3.40.50.360">
    <property type="match status" value="1"/>
</dbReference>
<dbReference type="HAMAP" id="MF_01216">
    <property type="entry name" value="Azoreductase_type1"/>
    <property type="match status" value="1"/>
</dbReference>
<dbReference type="InterPro" id="IPR003680">
    <property type="entry name" value="Flavodoxin_fold"/>
</dbReference>
<dbReference type="InterPro" id="IPR029039">
    <property type="entry name" value="Flavoprotein-like_sf"/>
</dbReference>
<dbReference type="InterPro" id="IPR050104">
    <property type="entry name" value="FMN-dep_NADH:Q_OxRdtase_AzoR1"/>
</dbReference>
<dbReference type="InterPro" id="IPR023048">
    <property type="entry name" value="NADH:quinone_OxRdtase_FMN_depd"/>
</dbReference>
<dbReference type="PANTHER" id="PTHR43741">
    <property type="entry name" value="FMN-DEPENDENT NADH-AZOREDUCTASE 1"/>
    <property type="match status" value="1"/>
</dbReference>
<dbReference type="PANTHER" id="PTHR43741:SF7">
    <property type="entry name" value="FMN-DEPENDENT NADH:QUINONE OXIDOREDUCTASE"/>
    <property type="match status" value="1"/>
</dbReference>
<dbReference type="Pfam" id="PF02525">
    <property type="entry name" value="Flavodoxin_2"/>
    <property type="match status" value="1"/>
</dbReference>
<dbReference type="SUPFAM" id="SSF52218">
    <property type="entry name" value="Flavoproteins"/>
    <property type="match status" value="1"/>
</dbReference>
<comment type="function">
    <text evidence="1">Quinone reductase that provides resistance to thiol-specific stress caused by electrophilic quinones.</text>
</comment>
<comment type="function">
    <text evidence="1">Also exhibits azoreductase activity. Catalyzes the reductive cleavage of the azo bond in aromatic azo compounds to the corresponding amines.</text>
</comment>
<comment type="catalytic activity">
    <reaction evidence="1">
        <text>2 a quinone + NADH + H(+) = 2 a 1,4-benzosemiquinone + NAD(+)</text>
        <dbReference type="Rhea" id="RHEA:65952"/>
        <dbReference type="ChEBI" id="CHEBI:15378"/>
        <dbReference type="ChEBI" id="CHEBI:57540"/>
        <dbReference type="ChEBI" id="CHEBI:57945"/>
        <dbReference type="ChEBI" id="CHEBI:132124"/>
        <dbReference type="ChEBI" id="CHEBI:134225"/>
    </reaction>
</comment>
<comment type="catalytic activity">
    <reaction evidence="1">
        <text>N,N-dimethyl-1,4-phenylenediamine + anthranilate + 2 NAD(+) = 2-(4-dimethylaminophenyl)diazenylbenzoate + 2 NADH + 2 H(+)</text>
        <dbReference type="Rhea" id="RHEA:55872"/>
        <dbReference type="ChEBI" id="CHEBI:15378"/>
        <dbReference type="ChEBI" id="CHEBI:15783"/>
        <dbReference type="ChEBI" id="CHEBI:16567"/>
        <dbReference type="ChEBI" id="CHEBI:57540"/>
        <dbReference type="ChEBI" id="CHEBI:57945"/>
        <dbReference type="ChEBI" id="CHEBI:71579"/>
        <dbReference type="EC" id="1.7.1.17"/>
    </reaction>
</comment>
<comment type="cofactor">
    <cofactor evidence="1">
        <name>FMN</name>
        <dbReference type="ChEBI" id="CHEBI:58210"/>
    </cofactor>
    <text evidence="1">Binds 1 FMN per subunit.</text>
</comment>
<comment type="subunit">
    <text evidence="1">Homodimer.</text>
</comment>
<comment type="similarity">
    <text evidence="1">Belongs to the azoreductase type 1 family.</text>
</comment>
<keyword id="KW-0285">Flavoprotein</keyword>
<keyword id="KW-0288">FMN</keyword>
<keyword id="KW-0520">NAD</keyword>
<keyword id="KW-0560">Oxidoreductase</keyword>
<keyword id="KW-1185">Reference proteome</keyword>
<reference key="1">
    <citation type="journal article" date="2001" name="J. Bacteriol.">
        <title>Genome sequence and comparative analysis of the solvent-producing bacterium Clostridium acetobutylicum.</title>
        <authorList>
            <person name="Noelling J."/>
            <person name="Breton G."/>
            <person name="Omelchenko M.V."/>
            <person name="Makarova K.S."/>
            <person name="Zeng Q."/>
            <person name="Gibson R."/>
            <person name="Lee H.M."/>
            <person name="Dubois J."/>
            <person name="Qiu D."/>
            <person name="Hitti J."/>
            <person name="Wolf Y.I."/>
            <person name="Tatusov R.L."/>
            <person name="Sabathe F."/>
            <person name="Doucette-Stamm L.A."/>
            <person name="Soucaille P."/>
            <person name="Daly M.J."/>
            <person name="Bennett G.N."/>
            <person name="Koonin E.V."/>
            <person name="Smith D.R."/>
        </authorList>
    </citation>
    <scope>NUCLEOTIDE SEQUENCE [LARGE SCALE GENOMIC DNA]</scope>
    <source>
        <strain>ATCC 824 / DSM 792 / JCM 1419 / IAM 19013 / LMG 5710 / NBRC 13948 / NRRL B-527 / VKM B-1787 / 2291 / W</strain>
    </source>
</reference>
<evidence type="ECO:0000255" key="1">
    <source>
        <dbReference type="HAMAP-Rule" id="MF_01216"/>
    </source>
</evidence>